<accession>P35955</accession>
<name>GAG_VILVK</name>
<feature type="chain" id="PRO_0000038808" description="Matrix protein p16">
    <location>
        <begin position="1"/>
        <end position="143"/>
    </location>
</feature>
<feature type="chain" id="PRO_0000038809" description="Capsid protein p25">
    <location>
        <begin position="144"/>
        <end position="363"/>
    </location>
</feature>
<feature type="chain" id="PRO_0000038810" description="Nucleocapsid protein p14">
    <location>
        <begin position="364"/>
        <end position="442"/>
    </location>
</feature>
<feature type="zinc finger region" description="CCHC-type 1" evidence="3">
    <location>
        <begin position="385"/>
        <end position="402"/>
    </location>
</feature>
<feature type="zinc finger region" description="CCHC-type 2" evidence="3">
    <location>
        <begin position="404"/>
        <end position="421"/>
    </location>
</feature>
<feature type="region of interest" description="Disordered" evidence="4">
    <location>
        <begin position="420"/>
        <end position="442"/>
    </location>
</feature>
<feature type="short sequence motif" description="PTAP/PSAP motif">
    <location>
        <begin position="436"/>
        <end position="439"/>
    </location>
</feature>
<feature type="site" description="Cleavage; by viral protease" evidence="6">
    <location>
        <begin position="363"/>
        <end position="364"/>
    </location>
</feature>
<protein>
    <recommendedName>
        <fullName>Gag polyprotein</fullName>
    </recommendedName>
    <component>
        <recommendedName>
            <fullName>Matrix protein p16</fullName>
        </recommendedName>
    </component>
    <component>
        <recommendedName>
            <fullName>Capsid protein p25</fullName>
        </recommendedName>
    </component>
    <component>
        <recommendedName>
            <fullName>Nucleocapsid protein p14</fullName>
        </recommendedName>
    </component>
</protein>
<dbReference type="EMBL" id="L06906">
    <property type="protein sequence ID" value="AAA48358.1"/>
    <property type="molecule type" value="Genomic_RNA"/>
</dbReference>
<dbReference type="EMBL" id="S55323">
    <property type="protein sequence ID" value="AAB25459.1"/>
    <property type="molecule type" value="Genomic_DNA"/>
</dbReference>
<dbReference type="SMR" id="P35955"/>
<dbReference type="KEGG" id="vg:1490012"/>
<dbReference type="Proteomes" id="UP000202605">
    <property type="component" value="Segment"/>
</dbReference>
<dbReference type="GO" id="GO:0019028">
    <property type="term" value="C:viral capsid"/>
    <property type="evidence" value="ECO:0007669"/>
    <property type="project" value="UniProtKB-KW"/>
</dbReference>
<dbReference type="GO" id="GO:0003676">
    <property type="term" value="F:nucleic acid binding"/>
    <property type="evidence" value="ECO:0007669"/>
    <property type="project" value="InterPro"/>
</dbReference>
<dbReference type="GO" id="GO:0008270">
    <property type="term" value="F:zinc ion binding"/>
    <property type="evidence" value="ECO:0007669"/>
    <property type="project" value="UniProtKB-KW"/>
</dbReference>
<dbReference type="GO" id="GO:0039702">
    <property type="term" value="P:viral budding via host ESCRT complex"/>
    <property type="evidence" value="ECO:0007669"/>
    <property type="project" value="UniProtKB-KW"/>
</dbReference>
<dbReference type="GO" id="GO:0075523">
    <property type="term" value="P:viral translational frameshifting"/>
    <property type="evidence" value="ECO:0007669"/>
    <property type="project" value="UniProtKB-KW"/>
</dbReference>
<dbReference type="Gene3D" id="1.10.1200.30">
    <property type="match status" value="1"/>
</dbReference>
<dbReference type="Gene3D" id="1.10.375.10">
    <property type="entry name" value="Human Immunodeficiency Virus Type 1 Capsid Protein"/>
    <property type="match status" value="1"/>
</dbReference>
<dbReference type="Gene3D" id="4.10.60.10">
    <property type="entry name" value="Zinc finger, CCHC-type"/>
    <property type="match status" value="1"/>
</dbReference>
<dbReference type="InterPro" id="IPR045345">
    <property type="entry name" value="Gag_p24_C"/>
</dbReference>
<dbReference type="InterPro" id="IPR050195">
    <property type="entry name" value="Primate_lentivir_Gag_pol-like"/>
</dbReference>
<dbReference type="InterPro" id="IPR008916">
    <property type="entry name" value="Retrov_capsid_C"/>
</dbReference>
<dbReference type="InterPro" id="IPR008919">
    <property type="entry name" value="Retrov_capsid_N"/>
</dbReference>
<dbReference type="InterPro" id="IPR001878">
    <property type="entry name" value="Znf_CCHC"/>
</dbReference>
<dbReference type="InterPro" id="IPR036875">
    <property type="entry name" value="Znf_CCHC_sf"/>
</dbReference>
<dbReference type="PANTHER" id="PTHR40389">
    <property type="entry name" value="ENDOGENOUS RETROVIRUS GROUP K MEMBER 24 GAG POLYPROTEIN-RELATED"/>
    <property type="match status" value="1"/>
</dbReference>
<dbReference type="PANTHER" id="PTHR40389:SF2">
    <property type="entry name" value="ENDOGENOUS RETROVIRUS GROUP K MEMBER 24 GAG POLYPROTEIN-RELATED"/>
    <property type="match status" value="1"/>
</dbReference>
<dbReference type="Pfam" id="PF00607">
    <property type="entry name" value="Gag_p24"/>
    <property type="match status" value="1"/>
</dbReference>
<dbReference type="Pfam" id="PF19317">
    <property type="entry name" value="Gag_p24_C"/>
    <property type="match status" value="1"/>
</dbReference>
<dbReference type="Pfam" id="PF00098">
    <property type="entry name" value="zf-CCHC"/>
    <property type="match status" value="2"/>
</dbReference>
<dbReference type="SMART" id="SM00343">
    <property type="entry name" value="ZnF_C2HC"/>
    <property type="match status" value="2"/>
</dbReference>
<dbReference type="SUPFAM" id="SSF47353">
    <property type="entry name" value="Retrovirus capsid dimerization domain-like"/>
    <property type="match status" value="1"/>
</dbReference>
<dbReference type="SUPFAM" id="SSF47943">
    <property type="entry name" value="Retrovirus capsid protein, N-terminal core domain"/>
    <property type="match status" value="1"/>
</dbReference>
<dbReference type="SUPFAM" id="SSF57756">
    <property type="entry name" value="Retrovirus zinc finger-like domains"/>
    <property type="match status" value="1"/>
</dbReference>
<dbReference type="PROSITE" id="PS50158">
    <property type="entry name" value="ZF_CCHC"/>
    <property type="match status" value="2"/>
</dbReference>
<keyword id="KW-0167">Capsid protein</keyword>
<keyword id="KW-0945">Host-virus interaction</keyword>
<keyword id="KW-0479">Metal-binding</keyword>
<keyword id="KW-0677">Repeat</keyword>
<keyword id="KW-0688">Ribosomal frameshifting</keyword>
<keyword id="KW-1198">Viral budding</keyword>
<keyword id="KW-1187">Viral budding via the host ESCRT complexes</keyword>
<keyword id="KW-1188">Viral release from host cell</keyword>
<keyword id="KW-0946">Virion</keyword>
<keyword id="KW-0862">Zinc</keyword>
<keyword id="KW-0863">Zinc-finger</keyword>
<organism>
    <name type="scientific">Maedi visna virus (strain KV1772)</name>
    <name type="common">MVV</name>
    <name type="synonym">Visna lentivirus</name>
    <dbReference type="NCBI Taxonomy" id="36374"/>
    <lineage>
        <taxon>Viruses</taxon>
        <taxon>Riboviria</taxon>
        <taxon>Pararnavirae</taxon>
        <taxon>Artverviricota</taxon>
        <taxon>Revtraviricetes</taxon>
        <taxon>Ortervirales</taxon>
        <taxon>Retroviridae</taxon>
        <taxon>Orthoretrovirinae</taxon>
        <taxon>Lentivirus</taxon>
        <taxon>Visna-maedi virus</taxon>
    </lineage>
</organism>
<organismHost>
    <name type="scientific">Ovis aries</name>
    <name type="common">Sheep</name>
    <dbReference type="NCBI Taxonomy" id="9940"/>
</organismHost>
<proteinExistence type="evidence at protein level"/>
<sequence>MAKQGSKEKKGYPELKEVIKATCKIRVGPGKETLTEGNCLWALKTIDFIFEDLKTEPWTITKMYTVWDRLKGLTPEETSKREFASLQATLACIMCSQMGMKPETVQAAKGIISMKEGLHENKEAKGEKVEQLYPNLEKHREVYPIVNLQAGGRSWKAVESVVFQQLQTVAMQHGLVSEDFERQLAYYATTWTSKDILEVLAMMPGNRAQKELIQGKLNEEAERWVRQNPPGPNVLTVDQIMGVGQTNQQASQANMDQARQICLQWVITALRSVRHMSHRPGNPMLVKQKNTESYEDFIARLLEAIDAEPVTDPIKTYLKVTLSYTNASTDCQKQMDRTLGTRVQQATVEEKMQACRDVGSEGFKMQLLAQALRPQGKAGQKGVNQKCYNCGKPGHLARQCRQGIICHHCGKRGHMQKDCRQKKQQGNNRRGPRVVPSAPPML</sequence>
<evidence type="ECO:0000250" key="1">
    <source>
        <dbReference type="UniProtKB" id="P04585"/>
    </source>
</evidence>
<evidence type="ECO:0000250" key="2">
    <source>
        <dbReference type="UniProtKB" id="P12497"/>
    </source>
</evidence>
<evidence type="ECO:0000255" key="3">
    <source>
        <dbReference type="PROSITE-ProRule" id="PRU00047"/>
    </source>
</evidence>
<evidence type="ECO:0000256" key="4">
    <source>
        <dbReference type="SAM" id="MobiDB-lite"/>
    </source>
</evidence>
<evidence type="ECO:0000305" key="5"/>
<evidence type="ECO:0000305" key="6">
    <source>
    </source>
</evidence>
<evidence type="ECO:0000305" key="7">
    <source>
    </source>
</evidence>
<comment type="function">
    <molecule>Isoform Gag polyprotein</molecule>
    <text evidence="1">Mediates, with Gag-Pol polyprotein, the essential events in virion assembly, including binding the plasma membrane, making the protein-protein interactions necessary to create spherical particles, recruiting the viral Env proteins, and packaging the genomic RNA via direct interactions with the RNA packaging sequence.</text>
</comment>
<comment type="function">
    <molecule>Matrix protein p16</molecule>
    <text evidence="2">Targets the polyprotein to the plasma membrane.</text>
</comment>
<comment type="function">
    <molecule>Capsid protein p25</molecule>
    <text evidence="1">Forms the core that encapsulates the genomic RNA-nucleocapsid complex in the virion.</text>
</comment>
<comment type="function">
    <molecule>Nucleocapsid protein p14</molecule>
    <text evidence="1">Encapsulates and protects viral dimeric unspliced genomic RNA (gRNA). Binds these RNAs through its zinc fingers. Acts as a nucleic acid chaperone which is involved in rearrangement of nucleic acid secondary structure during gRNA retrotranscription. Also facilitates template switch leading to recombination.</text>
</comment>
<comment type="subcellular location">
    <molecule>Matrix protein p16</molecule>
    <subcellularLocation>
        <location evidence="5">Virion</location>
    </subcellularLocation>
</comment>
<comment type="subcellular location">
    <molecule>Capsid protein p25</molecule>
    <subcellularLocation>
        <location evidence="5">Virion</location>
    </subcellularLocation>
</comment>
<comment type="subcellular location">
    <molecule>Nucleocapsid protein p14</molecule>
    <subcellularLocation>
        <location evidence="5">Virion</location>
    </subcellularLocation>
</comment>
<comment type="alternative products">
    <event type="ribosomal frameshifting"/>
    <isoform>
        <id>P35955-1</id>
        <name>Gag polyprotein</name>
        <sequence type="displayed"/>
    </isoform>
    <isoform>
        <id>P35956-1</id>
        <name>Gag-Pol polyprotein</name>
        <sequence type="external"/>
    </isoform>
</comment>
<comment type="domain">
    <text evidence="5">Late-budding domains (L domains) are short sequence motifs essential for viral particle budding. They recruit proteins of the host ESCRT machinery (Endosomal Sorting Complex Required for Transport) or ESCRT-associated proteins. Nucleocapsid protein p14 contains one L domain: a PTAP/PSAP motif, which interacts with the UEV domain of TSG101.</text>
</comment>
<comment type="PTM">
    <molecule>Isoform Gag polyprotein</molecule>
    <text evidence="5">Specific enzymatic cleavages by the viral protease yield mature proteins.</text>
</comment>
<comment type="miscellaneous">
    <molecule>Isoform Gag polyprotein</molecule>
    <text evidence="7">Produced by conventional translation.</text>
</comment>
<comment type="similarity">
    <text evidence="5">Belongs to the Ovine/caprine lentivirus group gag polyprotein family.</text>
</comment>
<gene>
    <name type="primary">gag</name>
</gene>
<reference key="1">
    <citation type="journal article" date="1993" name="Virology">
        <title>Nucleotide sequence and biological properties of a pathogenic proviral molecular clone of neurovirulent visna virus.</title>
        <authorList>
            <person name="Andresson O.S."/>
            <person name="Elser J.E."/>
            <person name="Tobin G.J."/>
            <person name="Greenwood J.D."/>
            <person name="Gonda M.A."/>
            <person name="Georgsson G."/>
            <person name="Andresdottir V."/>
            <person name="Benediktsdottir E."/>
            <person name="Carlsdottir H.M."/>
            <person name="Maentylae E.O."/>
            <person name="Rafnar B."/>
            <person name="Palsson P.A."/>
            <person name="Casey J.W."/>
            <person name="Petursson G."/>
        </authorList>
    </citation>
    <scope>NUCLEOTIDE SEQUENCE [GENOMIC RNA]</scope>
</reference>
<reference key="2">
    <citation type="journal article" date="2004" name="J. Virol.">
        <title>Important role for the CA-NC spacer region in the assembly of bovine immunodeficiency virus Gag protein.</title>
        <authorList>
            <person name="Guo X."/>
            <person name="Hu J."/>
            <person name="Whitney J.B."/>
            <person name="Russell R.S."/>
            <person name="Liang C."/>
        </authorList>
    </citation>
    <scope>PROTEOLYTIC CLEAVAGE (GAG POLYPROTEIN)</scope>
</reference>
<reference key="3">
    <citation type="journal article" date="2008" name="RNA">
        <title>The stimulatory RNA of the Visna-Maedi retrovirus ribosomal frameshifting signal is an unusual pseudoknot with an interstem element.</title>
        <authorList>
            <person name="Pennell S."/>
            <person name="Manktelow E."/>
            <person name="Flatt A."/>
            <person name="Kelly G."/>
            <person name="Smerdon S.J."/>
            <person name="Brierley I."/>
        </authorList>
    </citation>
    <scope>RIBOSOMAL FRAMESHIFTING</scope>
</reference>